<proteinExistence type="evidence at transcript level"/>
<organism>
    <name type="scientific">Escherichia coli O8 (strain IAI1)</name>
    <dbReference type="NCBI Taxonomy" id="585034"/>
    <lineage>
        <taxon>Bacteria</taxon>
        <taxon>Pseudomonadati</taxon>
        <taxon>Pseudomonadota</taxon>
        <taxon>Gammaproteobacteria</taxon>
        <taxon>Enterobacterales</taxon>
        <taxon>Enterobacteriaceae</taxon>
        <taxon>Escherichia</taxon>
    </lineage>
</organism>
<sequence>MQVLPPSSTGGPSRLFIMRPVATTLLMVAILLAGIIGYRALPVSALPEVDYPTIQVVTLYPGASPDVMTSAVTAPLERQFGQMSGLKQMSSQSSGGASVITLQFQLTLPLDVAEQEVQAAINAATNLLPSDLPNPPVYSKVNPADPPIMTLAVTSTAMPMTQVEDMVETRVAQKISQISGVGLVTLSGGQRPAVRVKLNAQAIAALGLTSETVRTAITGANVNSAKGSLDGPSRAVTLSANDQMQSAEEYRQLIIAYQNGAPIRLGDVATVEQGAENSWLGAWANKEQAIVMNVQRQPGANIISTADSIRQMLPQLTESLPKSVKVTVLSDRTTNIRASVNDTQFELMMAIALVVMIIYLFLRNIPATIIPGFAVPLSLIGTFAVMVFLDFSINNLTLMALTIATGFVVDDAIVVIENISRYIEKGEKPLAAALKGAGEIGFTIISLTFSLIAVLIPLLFMGDIVGRLFREFAITLAVAILISAVVSLTLTPMMCARMLSQESLRKQNRFSRASEKMFDRIIAAYGRGLAKVLNHPWLTLSVALSTLLLSVLLWVFIPKGFFPVQDNGIIQGTLQAPQSSSFANMAQRQRQVADVILQDPAVQSLTSFVGVDGTNPSLNSARLQINLKPLDERDDRVQKVIARLQTAVDKVPGVDLFLQPTQDLTIDTQVSRTQYQFTLQATSLDALSTWVPELMEKLQQLPQLSDVSSDWQDKGLVAYVNVDRDSASRLGISMADVDNALYNAFGQRLISTIYTQANQYRVVLEHNTENTPGLAALDTIRLTSSDGGVVPLSSIAKIEQRFAPLSINHLDQFPVTTISFNVPDNYSLGDAVQAIMDTEKTLNLPVDITTQFQGSTLAFQSALGSTVWLIVAAVVAMYIVLGILYESFIHPITILSTLPTAGVGALLALMIAGSELDVIAIIGIILLIGIVKKNAIMMIDFALAAEREQGMSPRDAIYQACLLRFRPILMTTLAALLGALPLMLSTGVGAELRRPLGIGMVGGLIVSQVLTLFTTPVIYLLFDRLALWTKSRFARHEEEA</sequence>
<evidence type="ECO:0000255" key="1">
    <source>
        <dbReference type="HAMAP-Rule" id="MF_01423"/>
    </source>
</evidence>
<protein>
    <recommendedName>
        <fullName evidence="1">Multidrug resistance protein MdtB</fullName>
    </recommendedName>
    <alternativeName>
        <fullName evidence="1">Multidrug transporter MdtB</fullName>
    </alternativeName>
</protein>
<comment type="function">
    <text evidence="1">The MdtABC tripartite complex confers resistance against novobiocin and deoxycholate.</text>
</comment>
<comment type="subunit">
    <text evidence="1">Part of a tripartite efflux system composed of MdtA, MdtB and MdtC. MdtB forms a heteromultimer with MdtC.</text>
</comment>
<comment type="subcellular location">
    <subcellularLocation>
        <location evidence="1">Cell inner membrane</location>
        <topology evidence="1">Multi-pass membrane protein</topology>
    </subcellularLocation>
</comment>
<comment type="induction">
    <text>The mdtABC operon is transcriptionally activated by BaeR.</text>
</comment>
<comment type="similarity">
    <text evidence="1">Belongs to the resistance-nodulation-cell division (RND) (TC 2.A.6) family. MdtB subfamily.</text>
</comment>
<reference key="1">
    <citation type="journal article" date="2009" name="PLoS Genet.">
        <title>Organised genome dynamics in the Escherichia coli species results in highly diverse adaptive paths.</title>
        <authorList>
            <person name="Touchon M."/>
            <person name="Hoede C."/>
            <person name="Tenaillon O."/>
            <person name="Barbe V."/>
            <person name="Baeriswyl S."/>
            <person name="Bidet P."/>
            <person name="Bingen E."/>
            <person name="Bonacorsi S."/>
            <person name="Bouchier C."/>
            <person name="Bouvet O."/>
            <person name="Calteau A."/>
            <person name="Chiapello H."/>
            <person name="Clermont O."/>
            <person name="Cruveiller S."/>
            <person name="Danchin A."/>
            <person name="Diard M."/>
            <person name="Dossat C."/>
            <person name="Karoui M.E."/>
            <person name="Frapy E."/>
            <person name="Garry L."/>
            <person name="Ghigo J.M."/>
            <person name="Gilles A.M."/>
            <person name="Johnson J."/>
            <person name="Le Bouguenec C."/>
            <person name="Lescat M."/>
            <person name="Mangenot S."/>
            <person name="Martinez-Jehanne V."/>
            <person name="Matic I."/>
            <person name="Nassif X."/>
            <person name="Oztas S."/>
            <person name="Petit M.A."/>
            <person name="Pichon C."/>
            <person name="Rouy Z."/>
            <person name="Ruf C.S."/>
            <person name="Schneider D."/>
            <person name="Tourret J."/>
            <person name="Vacherie B."/>
            <person name="Vallenet D."/>
            <person name="Medigue C."/>
            <person name="Rocha E.P.C."/>
            <person name="Denamur E."/>
        </authorList>
    </citation>
    <scope>NUCLEOTIDE SEQUENCE [LARGE SCALE GENOMIC DNA]</scope>
    <source>
        <strain>IAI1</strain>
    </source>
</reference>
<accession>B7M458</accession>
<feature type="chain" id="PRO_1000145650" description="Multidrug resistance protein MdtB">
    <location>
        <begin position="1"/>
        <end position="1040"/>
    </location>
</feature>
<feature type="transmembrane region" description="Helical" evidence="1">
    <location>
        <begin position="16"/>
        <end position="36"/>
    </location>
</feature>
<feature type="transmembrane region" description="Helical" evidence="1">
    <location>
        <begin position="347"/>
        <end position="367"/>
    </location>
</feature>
<feature type="transmembrane region" description="Helical" evidence="1">
    <location>
        <begin position="369"/>
        <end position="389"/>
    </location>
</feature>
<feature type="transmembrane region" description="Helical" evidence="1">
    <location>
        <begin position="396"/>
        <end position="416"/>
    </location>
</feature>
<feature type="transmembrane region" description="Helical" evidence="1">
    <location>
        <begin position="440"/>
        <end position="460"/>
    </location>
</feature>
<feature type="transmembrane region" description="Helical" evidence="1">
    <location>
        <begin position="472"/>
        <end position="492"/>
    </location>
</feature>
<feature type="transmembrane region" description="Helical" evidence="1">
    <location>
        <begin position="537"/>
        <end position="557"/>
    </location>
</feature>
<feature type="transmembrane region" description="Helical" evidence="1">
    <location>
        <begin position="863"/>
        <end position="883"/>
    </location>
</feature>
<feature type="transmembrane region" description="Helical" evidence="1">
    <location>
        <begin position="888"/>
        <end position="908"/>
    </location>
</feature>
<feature type="transmembrane region" description="Helical" evidence="1">
    <location>
        <begin position="911"/>
        <end position="931"/>
    </location>
</feature>
<feature type="transmembrane region" description="Helical" evidence="1">
    <location>
        <begin position="968"/>
        <end position="988"/>
    </location>
</feature>
<feature type="transmembrane region" description="Helical" evidence="1">
    <location>
        <begin position="998"/>
        <end position="1018"/>
    </location>
</feature>
<dbReference type="EMBL" id="CU928160">
    <property type="protein sequence ID" value="CAQ98997.1"/>
    <property type="molecule type" value="Genomic_DNA"/>
</dbReference>
<dbReference type="RefSeq" id="WP_001197905.1">
    <property type="nucleotide sequence ID" value="NC_011741.1"/>
</dbReference>
<dbReference type="SMR" id="B7M458"/>
<dbReference type="KEGG" id="ecr:ECIAI1_2151"/>
<dbReference type="HOGENOM" id="CLU_002755_1_2_6"/>
<dbReference type="GO" id="GO:0005886">
    <property type="term" value="C:plasma membrane"/>
    <property type="evidence" value="ECO:0007669"/>
    <property type="project" value="UniProtKB-SubCell"/>
</dbReference>
<dbReference type="GO" id="GO:0042910">
    <property type="term" value="F:xenobiotic transmembrane transporter activity"/>
    <property type="evidence" value="ECO:0007669"/>
    <property type="project" value="TreeGrafter"/>
</dbReference>
<dbReference type="FunFam" id="1.20.1640.10:FF:000001">
    <property type="entry name" value="Efflux pump membrane transporter"/>
    <property type="match status" value="1"/>
</dbReference>
<dbReference type="FunFam" id="3.30.70.1430:FF:000001">
    <property type="entry name" value="Efflux pump membrane transporter"/>
    <property type="match status" value="1"/>
</dbReference>
<dbReference type="FunFam" id="3.30.2090.10:FF:000003">
    <property type="entry name" value="Multidrug resistance protein MdtB"/>
    <property type="match status" value="1"/>
</dbReference>
<dbReference type="FunFam" id="3.30.2090.10:FF:000006">
    <property type="entry name" value="Multidrug resistance protein MdtB"/>
    <property type="match status" value="1"/>
</dbReference>
<dbReference type="Gene3D" id="3.30.70.1430">
    <property type="entry name" value="Multidrug efflux transporter AcrB pore domain"/>
    <property type="match status" value="2"/>
</dbReference>
<dbReference type="Gene3D" id="3.30.70.1440">
    <property type="entry name" value="Multidrug efflux transporter AcrB pore domain"/>
    <property type="match status" value="1"/>
</dbReference>
<dbReference type="Gene3D" id="3.30.70.1320">
    <property type="entry name" value="Multidrug efflux transporter AcrB pore domain like"/>
    <property type="match status" value="1"/>
</dbReference>
<dbReference type="Gene3D" id="3.30.2090.10">
    <property type="entry name" value="Multidrug efflux transporter AcrB TolC docking domain, DN and DC subdomains"/>
    <property type="match status" value="2"/>
</dbReference>
<dbReference type="Gene3D" id="1.20.1640.10">
    <property type="entry name" value="Multidrug efflux transporter AcrB transmembrane domain"/>
    <property type="match status" value="2"/>
</dbReference>
<dbReference type="HAMAP" id="MF_01423">
    <property type="entry name" value="MdtB"/>
    <property type="match status" value="1"/>
</dbReference>
<dbReference type="InterPro" id="IPR027463">
    <property type="entry name" value="AcrB_DN_DC_subdom"/>
</dbReference>
<dbReference type="InterPro" id="IPR001036">
    <property type="entry name" value="Acrflvin-R"/>
</dbReference>
<dbReference type="InterPro" id="IPR022831">
    <property type="entry name" value="Multidrug-R_MdtB"/>
</dbReference>
<dbReference type="NCBIfam" id="NF007798">
    <property type="entry name" value="PRK10503.1"/>
    <property type="match status" value="1"/>
</dbReference>
<dbReference type="NCBIfam" id="NF033617">
    <property type="entry name" value="RND_permease_2"/>
    <property type="match status" value="1"/>
</dbReference>
<dbReference type="PANTHER" id="PTHR32063">
    <property type="match status" value="1"/>
</dbReference>
<dbReference type="PANTHER" id="PTHR32063:SF21">
    <property type="entry name" value="MULTIDRUG RESISTANCE PROTEIN MDTB"/>
    <property type="match status" value="1"/>
</dbReference>
<dbReference type="Pfam" id="PF00873">
    <property type="entry name" value="ACR_tran"/>
    <property type="match status" value="1"/>
</dbReference>
<dbReference type="PRINTS" id="PR00702">
    <property type="entry name" value="ACRIFLAVINRP"/>
</dbReference>
<dbReference type="SUPFAM" id="SSF82693">
    <property type="entry name" value="Multidrug efflux transporter AcrB pore domain, PN1, PN2, PC1 and PC2 subdomains"/>
    <property type="match status" value="3"/>
</dbReference>
<dbReference type="SUPFAM" id="SSF82714">
    <property type="entry name" value="Multidrug efflux transporter AcrB TolC docking domain, DN and DC subdomains"/>
    <property type="match status" value="2"/>
</dbReference>
<dbReference type="SUPFAM" id="SSF82866">
    <property type="entry name" value="Multidrug efflux transporter AcrB transmembrane domain"/>
    <property type="match status" value="2"/>
</dbReference>
<gene>
    <name evidence="1" type="primary">mdtB</name>
    <name type="ordered locus">ECIAI1_2151</name>
</gene>
<name>MDTB_ECO8A</name>
<keyword id="KW-0997">Cell inner membrane</keyword>
<keyword id="KW-1003">Cell membrane</keyword>
<keyword id="KW-0472">Membrane</keyword>
<keyword id="KW-0812">Transmembrane</keyword>
<keyword id="KW-1133">Transmembrane helix</keyword>
<keyword id="KW-0813">Transport</keyword>